<geneLocation type="chloroplast"/>
<proteinExistence type="inferred from homology"/>
<gene>
    <name evidence="1" type="primary">rbcL</name>
</gene>
<keyword id="KW-0007">Acetylation</keyword>
<keyword id="KW-0113">Calvin cycle</keyword>
<keyword id="KW-0120">Carbon dioxide fixation</keyword>
<keyword id="KW-0150">Chloroplast</keyword>
<keyword id="KW-1015">Disulfide bond</keyword>
<keyword id="KW-0456">Lyase</keyword>
<keyword id="KW-0460">Magnesium</keyword>
<keyword id="KW-0479">Metal-binding</keyword>
<keyword id="KW-0488">Methylation</keyword>
<keyword id="KW-0503">Monooxygenase</keyword>
<keyword id="KW-0560">Oxidoreductase</keyword>
<keyword id="KW-0601">Photorespiration</keyword>
<keyword id="KW-0602">Photosynthesis</keyword>
<keyword id="KW-0934">Plastid</keyword>
<comment type="function">
    <text evidence="1">RuBisCO catalyzes two reactions: the carboxylation of D-ribulose 1,5-bisphosphate, the primary event in carbon dioxide fixation, as well as the oxidative fragmentation of the pentose substrate in the photorespiration process. Both reactions occur simultaneously and in competition at the same active site.</text>
</comment>
<comment type="catalytic activity">
    <reaction evidence="1">
        <text>2 (2R)-3-phosphoglycerate + 2 H(+) = D-ribulose 1,5-bisphosphate + CO2 + H2O</text>
        <dbReference type="Rhea" id="RHEA:23124"/>
        <dbReference type="ChEBI" id="CHEBI:15377"/>
        <dbReference type="ChEBI" id="CHEBI:15378"/>
        <dbReference type="ChEBI" id="CHEBI:16526"/>
        <dbReference type="ChEBI" id="CHEBI:57870"/>
        <dbReference type="ChEBI" id="CHEBI:58272"/>
        <dbReference type="EC" id="4.1.1.39"/>
    </reaction>
</comment>
<comment type="catalytic activity">
    <reaction evidence="1">
        <text>D-ribulose 1,5-bisphosphate + O2 = 2-phosphoglycolate + (2R)-3-phosphoglycerate + 2 H(+)</text>
        <dbReference type="Rhea" id="RHEA:36631"/>
        <dbReference type="ChEBI" id="CHEBI:15378"/>
        <dbReference type="ChEBI" id="CHEBI:15379"/>
        <dbReference type="ChEBI" id="CHEBI:57870"/>
        <dbReference type="ChEBI" id="CHEBI:58033"/>
        <dbReference type="ChEBI" id="CHEBI:58272"/>
    </reaction>
</comment>
<comment type="cofactor">
    <cofactor evidence="1">
        <name>Mg(2+)</name>
        <dbReference type="ChEBI" id="CHEBI:18420"/>
    </cofactor>
    <text evidence="1">Binds 1 Mg(2+) ion per subunit.</text>
</comment>
<comment type="subunit">
    <text evidence="1">Heterohexadecamer of 8 large chains and 8 small chains; disulfide-linked. The disulfide link is formed within the large subunit homodimers.</text>
</comment>
<comment type="subcellular location">
    <subcellularLocation>
        <location>Plastid</location>
        <location>Chloroplast</location>
    </subcellularLocation>
</comment>
<comment type="PTM">
    <text evidence="1">The disulfide bond which can form in the large chain dimeric partners within the hexadecamer appears to be associated with oxidative stress and protein turnover.</text>
</comment>
<comment type="miscellaneous">
    <text evidence="1">The basic functional RuBisCO is composed of a large chain homodimer in a 'head-to-tail' conformation. In form I RuBisCO this homodimer is arranged in a barrel-like tetramer with the small subunits forming a tetrameric 'cap' on each end of the 'barrel'.</text>
</comment>
<comment type="similarity">
    <text evidence="1">Belongs to the RuBisCO large chain family. Type I subfamily.</text>
</comment>
<protein>
    <recommendedName>
        <fullName evidence="1">Ribulose bisphosphate carboxylase large chain</fullName>
        <shortName evidence="1">RuBisCO large subunit</shortName>
        <ecNumber evidence="1">4.1.1.39</ecNumber>
    </recommendedName>
</protein>
<name>RBL_ZYGCR</name>
<organism>
    <name type="scientific">Zygnema circumcarinatum</name>
    <name type="common">Green alga</name>
    <dbReference type="NCBI Taxonomy" id="35869"/>
    <lineage>
        <taxon>Eukaryota</taxon>
        <taxon>Viridiplantae</taxon>
        <taxon>Streptophyta</taxon>
        <taxon>Zygnematophyceae</taxon>
        <taxon>Zygnematophycidae</taxon>
        <taxon>Zygnematales</taxon>
        <taxon>Zygnemataceae</taxon>
        <taxon>Zygnema</taxon>
    </lineage>
</organism>
<sequence>MSPQTETKAGVGFKAGVKDYRLTYYTPDYETKETDILAAFRMTPQAGVPPEEAGAAVAAESSTGTWTTVWTDGLTSLDRYKGRCYDIEPVPGEENQYIVYVAYPLDLFEEGSVTNLFTSIVGNVFGFKALRALRLEDLRIPPAYSKTFQGPPHGIQVERDKINKYGRPLLGCTIKPKLGLSAKNYGRAVYEVLRGGLDFTKDDENVTSQPFMRWRDRFLFCAEAIYKAQAETGEIKGHYLNATAGTCEEMLKRAEYAKELGVPIVMHDYLTGGFTANTSLAHYCRDNGLLLHIHRAMHAVIDRQKNHGIHFRVLAKALRMSGGDHIHSGTVVGKLEGEREVTLGFVDLLRDDYIEKDRSRGIYFTQDWVSMPGVLPVASGGIHVWHMPALTEIFGDDSVLQFGGGTLGHPWGNAPGAVANRVALEACVQARNEGRDLAREGNDVIREATKWSPELAAACEVWKEIKFEFDTIDTL</sequence>
<accession>Q32RQ1</accession>
<feature type="propeptide" id="PRO_0000251442" evidence="1">
    <location>
        <begin position="1"/>
        <end position="2"/>
    </location>
</feature>
<feature type="chain" id="PRO_0000251443" description="Ribulose bisphosphate carboxylase large chain">
    <location>
        <begin position="3"/>
        <end position="475"/>
    </location>
</feature>
<feature type="active site" description="Proton acceptor" evidence="1">
    <location>
        <position position="175"/>
    </location>
</feature>
<feature type="active site" description="Proton acceptor" evidence="1">
    <location>
        <position position="294"/>
    </location>
</feature>
<feature type="binding site" description="in homodimeric partner" evidence="1">
    <location>
        <position position="123"/>
    </location>
    <ligand>
        <name>substrate</name>
    </ligand>
</feature>
<feature type="binding site" evidence="1">
    <location>
        <position position="173"/>
    </location>
    <ligand>
        <name>substrate</name>
    </ligand>
</feature>
<feature type="binding site" evidence="1">
    <location>
        <position position="177"/>
    </location>
    <ligand>
        <name>substrate</name>
    </ligand>
</feature>
<feature type="binding site" description="via carbamate group" evidence="1">
    <location>
        <position position="201"/>
    </location>
    <ligand>
        <name>Mg(2+)</name>
        <dbReference type="ChEBI" id="CHEBI:18420"/>
    </ligand>
</feature>
<feature type="binding site" evidence="1">
    <location>
        <position position="203"/>
    </location>
    <ligand>
        <name>Mg(2+)</name>
        <dbReference type="ChEBI" id="CHEBI:18420"/>
    </ligand>
</feature>
<feature type="binding site" evidence="1">
    <location>
        <position position="204"/>
    </location>
    <ligand>
        <name>Mg(2+)</name>
        <dbReference type="ChEBI" id="CHEBI:18420"/>
    </ligand>
</feature>
<feature type="binding site" evidence="1">
    <location>
        <position position="295"/>
    </location>
    <ligand>
        <name>substrate</name>
    </ligand>
</feature>
<feature type="binding site" evidence="1">
    <location>
        <position position="327"/>
    </location>
    <ligand>
        <name>substrate</name>
    </ligand>
</feature>
<feature type="binding site" evidence="1">
    <location>
        <position position="379"/>
    </location>
    <ligand>
        <name>substrate</name>
    </ligand>
</feature>
<feature type="site" description="Transition state stabilizer" evidence="1">
    <location>
        <position position="334"/>
    </location>
</feature>
<feature type="modified residue" description="N-acetylproline" evidence="1">
    <location>
        <position position="3"/>
    </location>
</feature>
<feature type="modified residue" description="N6,N6,N6-trimethyllysine" evidence="1">
    <location>
        <position position="14"/>
    </location>
</feature>
<feature type="modified residue" description="N6-carboxylysine" evidence="1">
    <location>
        <position position="201"/>
    </location>
</feature>
<feature type="disulfide bond" description="Interchain; in linked form" evidence="1">
    <location>
        <position position="247"/>
    </location>
</feature>
<dbReference type="EC" id="4.1.1.39" evidence="1"/>
<dbReference type="EMBL" id="AY958086">
    <property type="protein sequence ID" value="AAX45851.1"/>
    <property type="molecule type" value="Genomic_DNA"/>
</dbReference>
<dbReference type="RefSeq" id="YP_636475.1">
    <property type="nucleotide sequence ID" value="NC_008117.1"/>
</dbReference>
<dbReference type="SMR" id="Q32RQ1"/>
<dbReference type="GeneID" id="4108171"/>
<dbReference type="GO" id="GO:0009507">
    <property type="term" value="C:chloroplast"/>
    <property type="evidence" value="ECO:0007669"/>
    <property type="project" value="UniProtKB-SubCell"/>
</dbReference>
<dbReference type="GO" id="GO:0000287">
    <property type="term" value="F:magnesium ion binding"/>
    <property type="evidence" value="ECO:0007669"/>
    <property type="project" value="UniProtKB-UniRule"/>
</dbReference>
<dbReference type="GO" id="GO:0004497">
    <property type="term" value="F:monooxygenase activity"/>
    <property type="evidence" value="ECO:0007669"/>
    <property type="project" value="UniProtKB-KW"/>
</dbReference>
<dbReference type="GO" id="GO:0016984">
    <property type="term" value="F:ribulose-bisphosphate carboxylase activity"/>
    <property type="evidence" value="ECO:0007669"/>
    <property type="project" value="UniProtKB-UniRule"/>
</dbReference>
<dbReference type="GO" id="GO:0009853">
    <property type="term" value="P:photorespiration"/>
    <property type="evidence" value="ECO:0007669"/>
    <property type="project" value="UniProtKB-KW"/>
</dbReference>
<dbReference type="GO" id="GO:0019253">
    <property type="term" value="P:reductive pentose-phosphate cycle"/>
    <property type="evidence" value="ECO:0007669"/>
    <property type="project" value="UniProtKB-UniRule"/>
</dbReference>
<dbReference type="CDD" id="cd08212">
    <property type="entry name" value="RuBisCO_large_I"/>
    <property type="match status" value="1"/>
</dbReference>
<dbReference type="FunFam" id="3.20.20.110:FF:000001">
    <property type="entry name" value="Ribulose bisphosphate carboxylase large chain"/>
    <property type="match status" value="1"/>
</dbReference>
<dbReference type="FunFam" id="3.30.70.150:FF:000001">
    <property type="entry name" value="Ribulose bisphosphate carboxylase large chain"/>
    <property type="match status" value="1"/>
</dbReference>
<dbReference type="Gene3D" id="3.20.20.110">
    <property type="entry name" value="Ribulose bisphosphate carboxylase, large subunit, C-terminal domain"/>
    <property type="match status" value="1"/>
</dbReference>
<dbReference type="Gene3D" id="3.30.70.150">
    <property type="entry name" value="RuBisCO large subunit, N-terminal domain"/>
    <property type="match status" value="1"/>
</dbReference>
<dbReference type="HAMAP" id="MF_01338">
    <property type="entry name" value="RuBisCO_L_type1"/>
    <property type="match status" value="1"/>
</dbReference>
<dbReference type="InterPro" id="IPR033966">
    <property type="entry name" value="RuBisCO"/>
</dbReference>
<dbReference type="InterPro" id="IPR020878">
    <property type="entry name" value="RuBisCo_large_chain_AS"/>
</dbReference>
<dbReference type="InterPro" id="IPR000685">
    <property type="entry name" value="RuBisCO_lsu_C"/>
</dbReference>
<dbReference type="InterPro" id="IPR036376">
    <property type="entry name" value="RuBisCO_lsu_C_sf"/>
</dbReference>
<dbReference type="InterPro" id="IPR017443">
    <property type="entry name" value="RuBisCO_lsu_fd_N"/>
</dbReference>
<dbReference type="InterPro" id="IPR036422">
    <property type="entry name" value="RuBisCO_lsu_N_sf"/>
</dbReference>
<dbReference type="InterPro" id="IPR020888">
    <property type="entry name" value="RuBisCO_lsuI"/>
</dbReference>
<dbReference type="NCBIfam" id="NF003252">
    <property type="entry name" value="PRK04208.1"/>
    <property type="match status" value="1"/>
</dbReference>
<dbReference type="PANTHER" id="PTHR42704">
    <property type="entry name" value="RIBULOSE BISPHOSPHATE CARBOXYLASE"/>
    <property type="match status" value="1"/>
</dbReference>
<dbReference type="PANTHER" id="PTHR42704:SF17">
    <property type="entry name" value="RIBULOSE BISPHOSPHATE CARBOXYLASE LARGE CHAIN"/>
    <property type="match status" value="1"/>
</dbReference>
<dbReference type="Pfam" id="PF00016">
    <property type="entry name" value="RuBisCO_large"/>
    <property type="match status" value="1"/>
</dbReference>
<dbReference type="Pfam" id="PF02788">
    <property type="entry name" value="RuBisCO_large_N"/>
    <property type="match status" value="1"/>
</dbReference>
<dbReference type="SFLD" id="SFLDG01052">
    <property type="entry name" value="RuBisCO"/>
    <property type="match status" value="1"/>
</dbReference>
<dbReference type="SFLD" id="SFLDS00014">
    <property type="entry name" value="RuBisCO"/>
    <property type="match status" value="1"/>
</dbReference>
<dbReference type="SFLD" id="SFLDG00301">
    <property type="entry name" value="RuBisCO-like_proteins"/>
    <property type="match status" value="1"/>
</dbReference>
<dbReference type="SUPFAM" id="SSF51649">
    <property type="entry name" value="RuBisCo, C-terminal domain"/>
    <property type="match status" value="1"/>
</dbReference>
<dbReference type="SUPFAM" id="SSF54966">
    <property type="entry name" value="RuBisCO, large subunit, small (N-terminal) domain"/>
    <property type="match status" value="1"/>
</dbReference>
<dbReference type="PROSITE" id="PS00157">
    <property type="entry name" value="RUBISCO_LARGE"/>
    <property type="match status" value="1"/>
</dbReference>
<evidence type="ECO:0000255" key="1">
    <source>
        <dbReference type="HAMAP-Rule" id="MF_01338"/>
    </source>
</evidence>
<reference key="1">
    <citation type="journal article" date="2005" name="BMC Biol.">
        <title>The complete chloroplast DNA sequences of the charophycean green algae Staurastrum and Zygnema reveal that the chloroplast genome underwent extensive changes during the evolution of the Zygnematales.</title>
        <authorList>
            <person name="Turmel M."/>
            <person name="Otis C."/>
            <person name="Lemieux C."/>
        </authorList>
    </citation>
    <scope>NUCLEOTIDE SEQUENCE [LARGE SCALE GENOMIC DNA]</scope>
</reference>